<gene>
    <name type="ordered locus">ECU07_0050</name>
</gene>
<gene>
    <name type="ordered locus">ECU09_2020</name>
</gene>
<keyword id="KW-1185">Reference proteome</keyword>
<protein>
    <recommendedName>
        <fullName>UPF0329 protein ECU07_0050/ECU09_2020</fullName>
    </recommendedName>
</protein>
<sequence>MDAGEHTKGGSSRGRLVAIGVLECGGRKVSGVVEVGTFKDPGGCPVVYHLMFRPTDLEELGGVMSPEFVKANDIEKIDEDKEYQDESKFVYPPGVTFETVKAADVFQVVWRNPSDTSEILRRLTIHRRPCVI</sequence>
<proteinExistence type="inferred from homology"/>
<comment type="similarity">
    <text evidence="1">Belongs to the UPF0329 family.</text>
</comment>
<evidence type="ECO:0000305" key="1"/>
<reference key="1">
    <citation type="journal article" date="2001" name="Nature">
        <title>Genome sequence and gene compaction of the eukaryote parasite Encephalitozoon cuniculi.</title>
        <authorList>
            <person name="Katinka M.D."/>
            <person name="Duprat S."/>
            <person name="Cornillot E."/>
            <person name="Metenier G."/>
            <person name="Thomarat F."/>
            <person name="Prensier G."/>
            <person name="Barbe V."/>
            <person name="Peyretaillade E."/>
            <person name="Brottier P."/>
            <person name="Wincker P."/>
            <person name="Delbac F."/>
            <person name="El Alaoui H."/>
            <person name="Peyret P."/>
            <person name="Saurin W."/>
            <person name="Gouy M."/>
            <person name="Weissenbach J."/>
            <person name="Vivares C.P."/>
        </authorList>
    </citation>
    <scope>NUCLEOTIDE SEQUENCE [LARGE SCALE GENOMIC DNA]</scope>
    <source>
        <strain>GB-M1</strain>
    </source>
</reference>
<reference key="2">
    <citation type="journal article" date="2009" name="BMC Genomics">
        <title>Identification of transcriptional signals in Encephalitozoon cuniculi widespread among Microsporidia phylum: support for accurate structural genome annotation.</title>
        <authorList>
            <person name="Peyretaillade E."/>
            <person name="Goncalves O."/>
            <person name="Terrat S."/>
            <person name="Dugat-Bony E."/>
            <person name="Wincker P."/>
            <person name="Cornman R.S."/>
            <person name="Evans J.D."/>
            <person name="Delbac F."/>
            <person name="Peyret P."/>
        </authorList>
    </citation>
    <scope>GENOME REANNOTATION</scope>
    <source>
        <strain>GB-M1</strain>
    </source>
</reference>
<name>Y705_ENCCU</name>
<accession>Q8STE6</accession>
<organism>
    <name type="scientific">Encephalitozoon cuniculi (strain GB-M1)</name>
    <name type="common">Microsporidian parasite</name>
    <dbReference type="NCBI Taxonomy" id="284813"/>
    <lineage>
        <taxon>Eukaryota</taxon>
        <taxon>Fungi</taxon>
        <taxon>Fungi incertae sedis</taxon>
        <taxon>Microsporidia</taxon>
        <taxon>Unikaryonidae</taxon>
        <taxon>Encephalitozoon</taxon>
    </lineage>
</organism>
<feature type="chain" id="PRO_0000223169" description="UPF0329 protein ECU07_0050/ECU09_2020">
    <location>
        <begin position="1"/>
        <end position="132"/>
    </location>
</feature>
<dbReference type="EMBL" id="AL590447">
    <property type="protein sequence ID" value="CAD25537.2"/>
    <property type="molecule type" value="Genomic_DNA"/>
</dbReference>
<dbReference type="EMBL" id="AL590451">
    <property type="protein sequence ID" value="CAD27175.2"/>
    <property type="molecule type" value="Genomic_DNA"/>
</dbReference>
<dbReference type="RefSeq" id="NP_585933.2">
    <property type="nucleotide sequence ID" value="NM_001041555.2"/>
</dbReference>
<dbReference type="RefSeq" id="XP_955756.1">
    <property type="nucleotide sequence ID" value="XM_950663.1"/>
</dbReference>
<dbReference type="GeneID" id="859361"/>
<dbReference type="KEGG" id="ecu:ECU07_0050"/>
<dbReference type="VEuPathDB" id="MicrosporidiaDB:ECU07_0050"/>
<dbReference type="VEuPathDB" id="MicrosporidiaDB:ECU09_2020"/>
<dbReference type="HOGENOM" id="CLU_1917047_0_0_1"/>
<dbReference type="InParanoid" id="Q8STE6"/>
<dbReference type="Proteomes" id="UP000000819">
    <property type="component" value="Chromosome IX"/>
</dbReference>
<dbReference type="Proteomes" id="UP000000819">
    <property type="component" value="Chromosome VII"/>
</dbReference>
<dbReference type="InterPro" id="IPR011667">
    <property type="entry name" value="UPF0329"/>
</dbReference>
<dbReference type="Pfam" id="PF07753">
    <property type="entry name" value="DUF1609"/>
    <property type="match status" value="1"/>
</dbReference>